<reference key="1">
    <citation type="journal article" date="2011" name="J. Bacteriol.">
        <title>Comparative genomics of 28 Salmonella enterica isolates: evidence for CRISPR-mediated adaptive sublineage evolution.</title>
        <authorList>
            <person name="Fricke W.F."/>
            <person name="Mammel M.K."/>
            <person name="McDermott P.F."/>
            <person name="Tartera C."/>
            <person name="White D.G."/>
            <person name="Leclerc J.E."/>
            <person name="Ravel J."/>
            <person name="Cebula T.A."/>
        </authorList>
    </citation>
    <scope>NUCLEOTIDE SEQUENCE [LARGE SCALE GENOMIC DNA]</scope>
    <source>
        <strain>SL476</strain>
    </source>
</reference>
<protein>
    <recommendedName>
        <fullName evidence="1">Ion-translocating oxidoreductase complex subunit D</fullName>
        <ecNumber evidence="1">7.-.-.-</ecNumber>
    </recommendedName>
    <alternativeName>
        <fullName evidence="1">Rsx electron transport complex subunit D</fullName>
    </alternativeName>
</protein>
<accession>B4THD3</accession>
<keyword id="KW-0997">Cell inner membrane</keyword>
<keyword id="KW-1003">Cell membrane</keyword>
<keyword id="KW-0249">Electron transport</keyword>
<keyword id="KW-0285">Flavoprotein</keyword>
<keyword id="KW-0288">FMN</keyword>
<keyword id="KW-0472">Membrane</keyword>
<keyword id="KW-0597">Phosphoprotein</keyword>
<keyword id="KW-1278">Translocase</keyword>
<keyword id="KW-0812">Transmembrane</keyword>
<keyword id="KW-1133">Transmembrane helix</keyword>
<keyword id="KW-0813">Transport</keyword>
<organism>
    <name type="scientific">Salmonella heidelberg (strain SL476)</name>
    <dbReference type="NCBI Taxonomy" id="454169"/>
    <lineage>
        <taxon>Bacteria</taxon>
        <taxon>Pseudomonadati</taxon>
        <taxon>Pseudomonadota</taxon>
        <taxon>Gammaproteobacteria</taxon>
        <taxon>Enterobacterales</taxon>
        <taxon>Enterobacteriaceae</taxon>
        <taxon>Salmonella</taxon>
    </lineage>
</organism>
<feature type="chain" id="PRO_1000125395" description="Ion-translocating oxidoreductase complex subunit D">
    <location>
        <begin position="1"/>
        <end position="352"/>
    </location>
</feature>
<feature type="transmembrane region" description="Helical" evidence="1">
    <location>
        <begin position="20"/>
        <end position="40"/>
    </location>
</feature>
<feature type="transmembrane region" description="Helical" evidence="1">
    <location>
        <begin position="42"/>
        <end position="62"/>
    </location>
</feature>
<feature type="transmembrane region" description="Helical" evidence="1">
    <location>
        <begin position="69"/>
        <end position="91"/>
    </location>
</feature>
<feature type="transmembrane region" description="Helical" evidence="1">
    <location>
        <begin position="123"/>
        <end position="143"/>
    </location>
</feature>
<feature type="transmembrane region" description="Helical" evidence="1">
    <location>
        <begin position="215"/>
        <end position="235"/>
    </location>
</feature>
<feature type="transmembrane region" description="Helical" evidence="1">
    <location>
        <begin position="242"/>
        <end position="262"/>
    </location>
</feature>
<feature type="transmembrane region" description="Helical" evidence="1">
    <location>
        <begin position="267"/>
        <end position="287"/>
    </location>
</feature>
<feature type="transmembrane region" description="Helical" evidence="1">
    <location>
        <begin position="301"/>
        <end position="321"/>
    </location>
</feature>
<feature type="transmembrane region" description="Helical" evidence="1">
    <location>
        <begin position="322"/>
        <end position="342"/>
    </location>
</feature>
<feature type="modified residue" description="FMN phosphoryl threonine" evidence="1">
    <location>
        <position position="187"/>
    </location>
</feature>
<sequence>MVFRIASSPYTHNQRQTSRIMLLVLIAALPGIAAQTWFFGWGTLFQIVLAAITALVAEAIVLRLRKQSVASHLQDYSALLTGLLLAVSIPPLAPWWMVVLGTGFAIIIAKQLYGGLGQNPFNPAMIGYVVLLISFPVQMTSWLPPYEIAATTPDMLDTLRMIFTGHTASGGDMTLLRIGIDGISQATPLDTFKTSLRAGHSVEQIMQYPIYSGALAGVGWQWVNLAWLVGGVFLLWQKAIRWHIPVSFLLTLALCAALGWLFSPATLASPQLHLLSGATMLGAFFILTDPVTASTTNRGRLIFGALAGVLVWLIRSFGGYPDGVAFAVLLANITVPLIDYYTRPRVYGHRKG</sequence>
<evidence type="ECO:0000255" key="1">
    <source>
        <dbReference type="HAMAP-Rule" id="MF_00462"/>
    </source>
</evidence>
<comment type="function">
    <text evidence="1">Part of a membrane-bound complex that couples electron transfer with translocation of ions across the membrane. Required to maintain the reduced state of SoxR.</text>
</comment>
<comment type="cofactor">
    <cofactor evidence="1">
        <name>FMN</name>
        <dbReference type="ChEBI" id="CHEBI:58210"/>
    </cofactor>
</comment>
<comment type="subunit">
    <text evidence="1">The complex is composed of six subunits: RsxA, RsxB, RsxC, RsxD, RsxE and RsxG.</text>
</comment>
<comment type="subcellular location">
    <subcellularLocation>
        <location evidence="1">Cell inner membrane</location>
        <topology evidence="1">Multi-pass membrane protein</topology>
    </subcellularLocation>
</comment>
<comment type="similarity">
    <text evidence="1">Belongs to the NqrB/RnfD family.</text>
</comment>
<name>RSXD_SALHS</name>
<dbReference type="EC" id="7.-.-.-" evidence="1"/>
<dbReference type="EMBL" id="CP001120">
    <property type="protein sequence ID" value="ACF67421.1"/>
    <property type="molecule type" value="Genomic_DNA"/>
</dbReference>
<dbReference type="RefSeq" id="WP_000231891.1">
    <property type="nucleotide sequence ID" value="NC_011083.1"/>
</dbReference>
<dbReference type="SMR" id="B4THD3"/>
<dbReference type="KEGG" id="seh:SeHA_C1626"/>
<dbReference type="HOGENOM" id="CLU_042020_0_0_6"/>
<dbReference type="Proteomes" id="UP000001866">
    <property type="component" value="Chromosome"/>
</dbReference>
<dbReference type="GO" id="GO:0005886">
    <property type="term" value="C:plasma membrane"/>
    <property type="evidence" value="ECO:0007669"/>
    <property type="project" value="UniProtKB-SubCell"/>
</dbReference>
<dbReference type="GO" id="GO:0022900">
    <property type="term" value="P:electron transport chain"/>
    <property type="evidence" value="ECO:0007669"/>
    <property type="project" value="UniProtKB-UniRule"/>
</dbReference>
<dbReference type="GO" id="GO:0055085">
    <property type="term" value="P:transmembrane transport"/>
    <property type="evidence" value="ECO:0007669"/>
    <property type="project" value="InterPro"/>
</dbReference>
<dbReference type="HAMAP" id="MF_00462">
    <property type="entry name" value="RsxD_RnfD"/>
    <property type="match status" value="1"/>
</dbReference>
<dbReference type="InterPro" id="IPR004338">
    <property type="entry name" value="NqrB/RnfD"/>
</dbReference>
<dbReference type="InterPro" id="IPR011303">
    <property type="entry name" value="RnfD_bac"/>
</dbReference>
<dbReference type="NCBIfam" id="NF002011">
    <property type="entry name" value="PRK00816.1"/>
    <property type="match status" value="1"/>
</dbReference>
<dbReference type="NCBIfam" id="TIGR01946">
    <property type="entry name" value="rnfD"/>
    <property type="match status" value="1"/>
</dbReference>
<dbReference type="PANTHER" id="PTHR30578">
    <property type="entry name" value="ELECTRON TRANSPORT COMPLEX PROTEIN RNFD"/>
    <property type="match status" value="1"/>
</dbReference>
<dbReference type="PANTHER" id="PTHR30578:SF0">
    <property type="entry name" value="ION-TRANSLOCATING OXIDOREDUCTASE COMPLEX SUBUNIT D"/>
    <property type="match status" value="1"/>
</dbReference>
<dbReference type="Pfam" id="PF03116">
    <property type="entry name" value="NQR2_RnfD_RnfE"/>
    <property type="match status" value="1"/>
</dbReference>
<proteinExistence type="inferred from homology"/>
<gene>
    <name evidence="1" type="primary">rsxD</name>
    <name type="ordered locus">SeHA_C1626</name>
</gene>